<proteinExistence type="inferred from homology"/>
<keyword id="KW-0030">Aminoacyl-tRNA synthetase</keyword>
<keyword id="KW-0067">ATP-binding</keyword>
<keyword id="KW-0963">Cytoplasm</keyword>
<keyword id="KW-0436">Ligase</keyword>
<keyword id="KW-0479">Metal-binding</keyword>
<keyword id="KW-0547">Nucleotide-binding</keyword>
<keyword id="KW-0648">Protein biosynthesis</keyword>
<keyword id="KW-1185">Reference proteome</keyword>
<keyword id="KW-0862">Zinc</keyword>
<sequence>MAKWIVGSAWPYVNTVPHLGNLIGSVLSADVFARFLRLMGEDVVFVSGSDEHGTPIEVEARKRGVEPKELTDKVHEYVKKLFEKYLISFDNYTRTHNPVHMEFVRETFMKIYENGYIFTQEMVMPYCPKDKMFLPDRFTVGTCPYCGAPDARGDQCERCGKLLDPPDLVNPRCAFCGSRPVWRKTLHWFFDLPKAAEGLVEWLERSELPNNVKKFTLNWVKEGLTPRSVTRDNKWGIPAPFPGAEGKTIYVWFEAVLGYLSAVKELDVKNGTNLFEEFWKDINSRPVYFIGKDNIPFHSIILPALLKATGEEYPLPYNISATEYLMYEGQKFSKRRRVGVWIDEALEVVPNPDYWRFALIRMRPEERDTNFTWREFYRIVNSELNDDIGNFAHRVLTFVERRFGGSVRGRVDEEVKKSIAELHEKYVKAMYKVKLKEASGLVLEMARLGNKYLNEKEPWRLLKEGKEEEARDVMYTCLFILREVALHLAPFAPSAAEELWKMIGEPGSVHERGKLLTSGSEPAGEVKEPKPLFQKLPKDFLERVDELLEEARRKVEKLRPI</sequence>
<protein>
    <recommendedName>
        <fullName evidence="1">Methionine--tRNA ligase</fullName>
        <ecNumber evidence="1">6.1.1.10</ecNumber>
    </recommendedName>
    <alternativeName>
        <fullName evidence="1">Methionyl-tRNA synthetase</fullName>
        <shortName evidence="1">MetRS</shortName>
    </alternativeName>
</protein>
<comment type="function">
    <text evidence="1">Is required not only for elongation of protein synthesis but also for the initiation of all mRNA translation through initiator tRNA(fMet) aminoacylation.</text>
</comment>
<comment type="catalytic activity">
    <reaction evidence="1">
        <text>tRNA(Met) + L-methionine + ATP = L-methionyl-tRNA(Met) + AMP + diphosphate</text>
        <dbReference type="Rhea" id="RHEA:13481"/>
        <dbReference type="Rhea" id="RHEA-COMP:9667"/>
        <dbReference type="Rhea" id="RHEA-COMP:9698"/>
        <dbReference type="ChEBI" id="CHEBI:30616"/>
        <dbReference type="ChEBI" id="CHEBI:33019"/>
        <dbReference type="ChEBI" id="CHEBI:57844"/>
        <dbReference type="ChEBI" id="CHEBI:78442"/>
        <dbReference type="ChEBI" id="CHEBI:78530"/>
        <dbReference type="ChEBI" id="CHEBI:456215"/>
        <dbReference type="EC" id="6.1.1.10"/>
    </reaction>
</comment>
<comment type="cofactor">
    <cofactor evidence="1">
        <name>Zn(2+)</name>
        <dbReference type="ChEBI" id="CHEBI:29105"/>
    </cofactor>
    <text evidence="1">Binds 1 zinc ion per subunit.</text>
</comment>
<comment type="subcellular location">
    <subcellularLocation>
        <location evidence="1">Cytoplasm</location>
    </subcellularLocation>
</comment>
<comment type="similarity">
    <text evidence="1">Belongs to the class-I aminoacyl-tRNA synthetase family. MetG type 1 subfamily.</text>
</comment>
<evidence type="ECO:0000255" key="1">
    <source>
        <dbReference type="HAMAP-Rule" id="MF_00098"/>
    </source>
</evidence>
<gene>
    <name evidence="1" type="primary">metG</name>
    <name type="ordered locus">Igni_1155</name>
</gene>
<organism>
    <name type="scientific">Ignicoccus hospitalis (strain KIN4/I / DSM 18386 / JCM 14125)</name>
    <dbReference type="NCBI Taxonomy" id="453591"/>
    <lineage>
        <taxon>Archaea</taxon>
        <taxon>Thermoproteota</taxon>
        <taxon>Thermoprotei</taxon>
        <taxon>Desulfurococcales</taxon>
        <taxon>Desulfurococcaceae</taxon>
        <taxon>Ignicoccus</taxon>
    </lineage>
</organism>
<accession>A8ABN0</accession>
<feature type="chain" id="PRO_0000331938" description="Methionine--tRNA ligase">
    <location>
        <begin position="1"/>
        <end position="561"/>
    </location>
</feature>
<feature type="short sequence motif" description="'HIGH' region">
    <location>
        <begin position="11"/>
        <end position="21"/>
    </location>
</feature>
<feature type="binding site" evidence="1">
    <location>
        <position position="143"/>
    </location>
    <ligand>
        <name>Zn(2+)</name>
        <dbReference type="ChEBI" id="CHEBI:29105"/>
    </ligand>
</feature>
<feature type="binding site" evidence="1">
    <location>
        <position position="146"/>
    </location>
    <ligand>
        <name>Zn(2+)</name>
        <dbReference type="ChEBI" id="CHEBI:29105"/>
    </ligand>
</feature>
<feature type="binding site" evidence="1">
    <location>
        <position position="156"/>
    </location>
    <ligand>
        <name>Zn(2+)</name>
        <dbReference type="ChEBI" id="CHEBI:29105"/>
    </ligand>
</feature>
<feature type="binding site" evidence="1">
    <location>
        <position position="159"/>
    </location>
    <ligand>
        <name>Zn(2+)</name>
        <dbReference type="ChEBI" id="CHEBI:29105"/>
    </ligand>
</feature>
<feature type="binding site" evidence="1">
    <location>
        <position position="334"/>
    </location>
    <ligand>
        <name>ATP</name>
        <dbReference type="ChEBI" id="CHEBI:30616"/>
    </ligand>
</feature>
<dbReference type="EC" id="6.1.1.10" evidence="1"/>
<dbReference type="EMBL" id="CP000816">
    <property type="protein sequence ID" value="ABU82332.1"/>
    <property type="molecule type" value="Genomic_DNA"/>
</dbReference>
<dbReference type="RefSeq" id="WP_012123296.1">
    <property type="nucleotide sequence ID" value="NC_009776.1"/>
</dbReference>
<dbReference type="SMR" id="A8ABN0"/>
<dbReference type="STRING" id="453591.Igni_1155"/>
<dbReference type="GeneID" id="5563016"/>
<dbReference type="KEGG" id="iho:Igni_1155"/>
<dbReference type="eggNOG" id="arCOG00810">
    <property type="taxonomic scope" value="Archaea"/>
</dbReference>
<dbReference type="HOGENOM" id="CLU_009710_1_2_2"/>
<dbReference type="OrthoDB" id="371856at2157"/>
<dbReference type="PhylomeDB" id="A8ABN0"/>
<dbReference type="Proteomes" id="UP000000262">
    <property type="component" value="Chromosome"/>
</dbReference>
<dbReference type="GO" id="GO:0017101">
    <property type="term" value="C:aminoacyl-tRNA synthetase multienzyme complex"/>
    <property type="evidence" value="ECO:0007669"/>
    <property type="project" value="TreeGrafter"/>
</dbReference>
<dbReference type="GO" id="GO:0005829">
    <property type="term" value="C:cytosol"/>
    <property type="evidence" value="ECO:0007669"/>
    <property type="project" value="TreeGrafter"/>
</dbReference>
<dbReference type="GO" id="GO:0005524">
    <property type="term" value="F:ATP binding"/>
    <property type="evidence" value="ECO:0007669"/>
    <property type="project" value="UniProtKB-UniRule"/>
</dbReference>
<dbReference type="GO" id="GO:0046872">
    <property type="term" value="F:metal ion binding"/>
    <property type="evidence" value="ECO:0007669"/>
    <property type="project" value="UniProtKB-KW"/>
</dbReference>
<dbReference type="GO" id="GO:0004825">
    <property type="term" value="F:methionine-tRNA ligase activity"/>
    <property type="evidence" value="ECO:0007669"/>
    <property type="project" value="UniProtKB-UniRule"/>
</dbReference>
<dbReference type="GO" id="GO:0006431">
    <property type="term" value="P:methionyl-tRNA aminoacylation"/>
    <property type="evidence" value="ECO:0007669"/>
    <property type="project" value="UniProtKB-UniRule"/>
</dbReference>
<dbReference type="CDD" id="cd07957">
    <property type="entry name" value="Anticodon_Ia_Met"/>
    <property type="match status" value="1"/>
</dbReference>
<dbReference type="CDD" id="cd00814">
    <property type="entry name" value="MetRS_core"/>
    <property type="match status" value="1"/>
</dbReference>
<dbReference type="FunFam" id="2.20.28.20:FF:000001">
    <property type="entry name" value="Methionine--tRNA ligase"/>
    <property type="match status" value="1"/>
</dbReference>
<dbReference type="Gene3D" id="3.40.50.620">
    <property type="entry name" value="HUPs"/>
    <property type="match status" value="1"/>
</dbReference>
<dbReference type="Gene3D" id="1.10.730.10">
    <property type="entry name" value="Isoleucyl-tRNA Synthetase, Domain 1"/>
    <property type="match status" value="1"/>
</dbReference>
<dbReference type="Gene3D" id="2.20.28.20">
    <property type="entry name" value="Methionyl-tRNA synthetase, Zn-domain"/>
    <property type="match status" value="1"/>
</dbReference>
<dbReference type="HAMAP" id="MF_00098">
    <property type="entry name" value="Met_tRNA_synth_type1"/>
    <property type="match status" value="1"/>
</dbReference>
<dbReference type="InterPro" id="IPR041872">
    <property type="entry name" value="Anticodon_Met"/>
</dbReference>
<dbReference type="InterPro" id="IPR023458">
    <property type="entry name" value="Met-tRNA_ligase_1"/>
</dbReference>
<dbReference type="InterPro" id="IPR014758">
    <property type="entry name" value="Met-tRNA_synth"/>
</dbReference>
<dbReference type="InterPro" id="IPR015413">
    <property type="entry name" value="Methionyl/Leucyl_tRNA_Synth"/>
</dbReference>
<dbReference type="InterPro" id="IPR033911">
    <property type="entry name" value="MetRS_core"/>
</dbReference>
<dbReference type="InterPro" id="IPR029038">
    <property type="entry name" value="MetRS_Zn"/>
</dbReference>
<dbReference type="InterPro" id="IPR014729">
    <property type="entry name" value="Rossmann-like_a/b/a_fold"/>
</dbReference>
<dbReference type="InterPro" id="IPR009080">
    <property type="entry name" value="tRNAsynth_Ia_anticodon-bd"/>
</dbReference>
<dbReference type="NCBIfam" id="TIGR00398">
    <property type="entry name" value="metG"/>
    <property type="match status" value="1"/>
</dbReference>
<dbReference type="PANTHER" id="PTHR45765">
    <property type="entry name" value="METHIONINE--TRNA LIGASE"/>
    <property type="match status" value="1"/>
</dbReference>
<dbReference type="PANTHER" id="PTHR45765:SF1">
    <property type="entry name" value="METHIONINE--TRNA LIGASE, CYTOPLASMIC"/>
    <property type="match status" value="1"/>
</dbReference>
<dbReference type="Pfam" id="PF19303">
    <property type="entry name" value="Anticodon_3"/>
    <property type="match status" value="1"/>
</dbReference>
<dbReference type="Pfam" id="PF09334">
    <property type="entry name" value="tRNA-synt_1g"/>
    <property type="match status" value="1"/>
</dbReference>
<dbReference type="PRINTS" id="PR01041">
    <property type="entry name" value="TRNASYNTHMET"/>
</dbReference>
<dbReference type="SUPFAM" id="SSF47323">
    <property type="entry name" value="Anticodon-binding domain of a subclass of class I aminoacyl-tRNA synthetases"/>
    <property type="match status" value="1"/>
</dbReference>
<dbReference type="SUPFAM" id="SSF57770">
    <property type="entry name" value="Methionyl-tRNA synthetase (MetRS), Zn-domain"/>
    <property type="match status" value="1"/>
</dbReference>
<dbReference type="SUPFAM" id="SSF52374">
    <property type="entry name" value="Nucleotidylyl transferase"/>
    <property type="match status" value="1"/>
</dbReference>
<reference key="1">
    <citation type="journal article" date="2008" name="Genome Biol.">
        <title>A genomic analysis of the archaeal system Ignicoccus hospitalis-Nanoarchaeum equitans.</title>
        <authorList>
            <person name="Podar M."/>
            <person name="Anderson I."/>
            <person name="Makarova K.S."/>
            <person name="Elkins J.G."/>
            <person name="Ivanova N."/>
            <person name="Wall M.A."/>
            <person name="Lykidis A."/>
            <person name="Mavromatis K."/>
            <person name="Sun H."/>
            <person name="Hudson M.E."/>
            <person name="Chen W."/>
            <person name="Deciu C."/>
            <person name="Hutchison D."/>
            <person name="Eads J.R."/>
            <person name="Anderson A."/>
            <person name="Fernandes F."/>
            <person name="Szeto E."/>
            <person name="Lapidus A."/>
            <person name="Kyrpides N.C."/>
            <person name="Saier M.H. Jr."/>
            <person name="Richardson P.M."/>
            <person name="Rachel R."/>
            <person name="Huber H."/>
            <person name="Eisen J.A."/>
            <person name="Koonin E.V."/>
            <person name="Keller M."/>
            <person name="Stetter K.O."/>
        </authorList>
    </citation>
    <scope>NUCLEOTIDE SEQUENCE [LARGE SCALE GENOMIC DNA]</scope>
    <source>
        <strain>KIN4/I / DSM 18386 / JCM 14125</strain>
    </source>
</reference>
<name>SYM_IGNH4</name>